<comment type="function">
    <text evidence="1">Has a role in the formation of the multivesicular body (MVB). Required for the sorting of lipids to form intralumenal vesicles and for fluid-phase transport to the vacuole. Required for sorting several plasma membrane proteins into the MVB (By similarity).</text>
</comment>
<comment type="subunit">
    <text evidence="1">Homodimer (in cytoplasm).</text>
</comment>
<comment type="subcellular location">
    <subcellularLocation>
        <location evidence="2">Cytoplasm</location>
    </subcellularLocation>
    <subcellularLocation>
        <location evidence="2">Endosome membrane</location>
        <topology evidence="2">Peripheral membrane protein</topology>
    </subcellularLocation>
</comment>
<comment type="similarity">
    <text evidence="4">Belongs to the VTA1 family.</text>
</comment>
<accession>O13703</accession>
<sequence length="389" mass="42305">MIQIDTIPKELQSIQPFVRRFNELEAHNPVIAYWSLYWAAQMALSSSHGVSNECKDFLLSLIEHLEDLRKNLGENENVSDETSAKAYVESFSLEVLVQAERNSKNGKPDVQAYLAARDFLELSRIWGPPTEQITKSIKFCKLRALQVANPQRKAKTPSNHATEELQQSSTNSTTLPTQEAAVETNASASHETSFALPTTSPAASLSISPTKSAAVSSEPNVEADVKSLSSTPAAPQLNSPSHSYEPTTFPSTTSITENLPTIDPTRSTRSSSHIQSLSPESKQTSDGHRPPSPTSITTTSTSIDPSVAFSSKSTLATTRTNAPLSRPSQPTKASPLNKFSALEAIQSARSHARYAYSALDYEDTTTAIHHLKSALKLLEEEEQGNHTAD</sequence>
<keyword id="KW-0963">Cytoplasm</keyword>
<keyword id="KW-0967">Endosome</keyword>
<keyword id="KW-0445">Lipid transport</keyword>
<keyword id="KW-0472">Membrane</keyword>
<keyword id="KW-0653">Protein transport</keyword>
<keyword id="KW-1185">Reference proteome</keyword>
<keyword id="KW-0813">Transport</keyword>
<gene>
    <name type="primary">vts1</name>
    <name type="synonym">new6</name>
    <name type="ORF">SPAC13F5.04c</name>
    <name type="ORF">SPAC13F5.08</name>
</gene>
<protein>
    <recommendedName>
        <fullName>Vacuolar protein sorting-associated protein vts1</fullName>
    </recommendedName>
    <alternativeName>
        <fullName>VPS20-associated protein 1</fullName>
    </alternativeName>
</protein>
<organism>
    <name type="scientific">Schizosaccharomyces pombe (strain 972 / ATCC 24843)</name>
    <name type="common">Fission yeast</name>
    <dbReference type="NCBI Taxonomy" id="284812"/>
    <lineage>
        <taxon>Eukaryota</taxon>
        <taxon>Fungi</taxon>
        <taxon>Dikarya</taxon>
        <taxon>Ascomycota</taxon>
        <taxon>Taphrinomycotina</taxon>
        <taxon>Schizosaccharomycetes</taxon>
        <taxon>Schizosaccharomycetales</taxon>
        <taxon>Schizosaccharomycetaceae</taxon>
        <taxon>Schizosaccharomyces</taxon>
    </lineage>
</organism>
<dbReference type="EMBL" id="CU329670">
    <property type="protein sequence ID" value="CAB11767.2"/>
    <property type="molecule type" value="Genomic_DNA"/>
</dbReference>
<dbReference type="PIR" id="T37629">
    <property type="entry name" value="T37629"/>
</dbReference>
<dbReference type="RefSeq" id="NP_593652.2">
    <property type="nucleotide sequence ID" value="NM_001019084.2"/>
</dbReference>
<dbReference type="SMR" id="O13703"/>
<dbReference type="BioGRID" id="279336">
    <property type="interactions" value="9"/>
</dbReference>
<dbReference type="FunCoup" id="O13703">
    <property type="interactions" value="383"/>
</dbReference>
<dbReference type="STRING" id="284812.O13703"/>
<dbReference type="iPTMnet" id="O13703"/>
<dbReference type="PaxDb" id="4896-SPAC13F5.04c.1"/>
<dbReference type="EnsemblFungi" id="SPAC13F5.04c.1">
    <property type="protein sequence ID" value="SPAC13F5.04c.1:pep"/>
    <property type="gene ID" value="SPAC13F5.04c"/>
</dbReference>
<dbReference type="GeneID" id="2542892"/>
<dbReference type="KEGG" id="spo:2542892"/>
<dbReference type="PomBase" id="SPAC13F5.04c"/>
<dbReference type="VEuPathDB" id="FungiDB:SPAC13F5.04c"/>
<dbReference type="eggNOG" id="KOG0917">
    <property type="taxonomic scope" value="Eukaryota"/>
</dbReference>
<dbReference type="HOGENOM" id="CLU_877604_0_0_1"/>
<dbReference type="InParanoid" id="O13703"/>
<dbReference type="OMA" id="AYWCEYH"/>
<dbReference type="Reactome" id="R-SPO-917729">
    <property type="pathway name" value="Endosomal Sorting Complex Required For Transport (ESCRT)"/>
</dbReference>
<dbReference type="PRO" id="PR:O13703"/>
<dbReference type="Proteomes" id="UP000002485">
    <property type="component" value="Chromosome I"/>
</dbReference>
<dbReference type="GO" id="GO:0010008">
    <property type="term" value="C:endosome membrane"/>
    <property type="evidence" value="ECO:0007669"/>
    <property type="project" value="UniProtKB-SubCell"/>
</dbReference>
<dbReference type="GO" id="GO:0005771">
    <property type="term" value="C:multivesicular body"/>
    <property type="evidence" value="ECO:0000318"/>
    <property type="project" value="GO_Central"/>
</dbReference>
<dbReference type="GO" id="GO:0032511">
    <property type="term" value="P:late endosome to vacuole transport via multivesicular body sorting pathway"/>
    <property type="evidence" value="ECO:0000318"/>
    <property type="project" value="GO_Central"/>
</dbReference>
<dbReference type="GO" id="GO:0006869">
    <property type="term" value="P:lipid transport"/>
    <property type="evidence" value="ECO:0007669"/>
    <property type="project" value="UniProtKB-KW"/>
</dbReference>
<dbReference type="GO" id="GO:0015031">
    <property type="term" value="P:protein transport"/>
    <property type="evidence" value="ECO:0007669"/>
    <property type="project" value="UniProtKB-KW"/>
</dbReference>
<dbReference type="Gene3D" id="1.20.5.420">
    <property type="entry name" value="Immunoglobulin FC, subunit C"/>
    <property type="match status" value="1"/>
</dbReference>
<dbReference type="Gene3D" id="1.25.40.270">
    <property type="entry name" value="Vacuolar protein sorting-associated protein vta1"/>
    <property type="match status" value="1"/>
</dbReference>
<dbReference type="InterPro" id="IPR044538">
    <property type="entry name" value="Vta1-like"/>
</dbReference>
<dbReference type="InterPro" id="IPR039431">
    <property type="entry name" value="Vta1/CALS_N"/>
</dbReference>
<dbReference type="InterPro" id="IPR023175">
    <property type="entry name" value="Vta1/CALS_N_sf"/>
</dbReference>
<dbReference type="InterPro" id="IPR041212">
    <property type="entry name" value="Vta1_C"/>
</dbReference>
<dbReference type="PANTHER" id="PTHR46009">
    <property type="entry name" value="VACUOLAR PROTEIN SORTING-ASSOCIATED PROTEIN VTA1 HOMOLOG"/>
    <property type="match status" value="1"/>
</dbReference>
<dbReference type="PANTHER" id="PTHR46009:SF1">
    <property type="entry name" value="VACUOLAR PROTEIN SORTING-ASSOCIATED PROTEIN VTA1 HOMOLOG"/>
    <property type="match status" value="1"/>
</dbReference>
<dbReference type="Pfam" id="PF04652">
    <property type="entry name" value="Vta1"/>
    <property type="match status" value="1"/>
</dbReference>
<dbReference type="Pfam" id="PF18097">
    <property type="entry name" value="Vta1_C"/>
    <property type="match status" value="1"/>
</dbReference>
<evidence type="ECO:0000250" key="1"/>
<evidence type="ECO:0000250" key="2">
    <source>
        <dbReference type="UniProtKB" id="Q06263"/>
    </source>
</evidence>
<evidence type="ECO:0000256" key="3">
    <source>
        <dbReference type="SAM" id="MobiDB-lite"/>
    </source>
</evidence>
<evidence type="ECO:0000305" key="4"/>
<name>VTA1_SCHPO</name>
<proteinExistence type="inferred from homology"/>
<reference key="1">
    <citation type="journal article" date="2002" name="Nature">
        <title>The genome sequence of Schizosaccharomyces pombe.</title>
        <authorList>
            <person name="Wood V."/>
            <person name="Gwilliam R."/>
            <person name="Rajandream M.A."/>
            <person name="Lyne M.H."/>
            <person name="Lyne R."/>
            <person name="Stewart A."/>
            <person name="Sgouros J.G."/>
            <person name="Peat N."/>
            <person name="Hayles J."/>
            <person name="Baker S.G."/>
            <person name="Basham D."/>
            <person name="Bowman S."/>
            <person name="Brooks K."/>
            <person name="Brown D."/>
            <person name="Brown S."/>
            <person name="Chillingworth T."/>
            <person name="Churcher C.M."/>
            <person name="Collins M."/>
            <person name="Connor R."/>
            <person name="Cronin A."/>
            <person name="Davis P."/>
            <person name="Feltwell T."/>
            <person name="Fraser A."/>
            <person name="Gentles S."/>
            <person name="Goble A."/>
            <person name="Hamlin N."/>
            <person name="Harris D.E."/>
            <person name="Hidalgo J."/>
            <person name="Hodgson G."/>
            <person name="Holroyd S."/>
            <person name="Hornsby T."/>
            <person name="Howarth S."/>
            <person name="Huckle E.J."/>
            <person name="Hunt S."/>
            <person name="Jagels K."/>
            <person name="James K.D."/>
            <person name="Jones L."/>
            <person name="Jones M."/>
            <person name="Leather S."/>
            <person name="McDonald S."/>
            <person name="McLean J."/>
            <person name="Mooney P."/>
            <person name="Moule S."/>
            <person name="Mungall K.L."/>
            <person name="Murphy L.D."/>
            <person name="Niblett D."/>
            <person name="Odell C."/>
            <person name="Oliver K."/>
            <person name="O'Neil S."/>
            <person name="Pearson D."/>
            <person name="Quail M.A."/>
            <person name="Rabbinowitsch E."/>
            <person name="Rutherford K.M."/>
            <person name="Rutter S."/>
            <person name="Saunders D."/>
            <person name="Seeger K."/>
            <person name="Sharp S."/>
            <person name="Skelton J."/>
            <person name="Simmonds M.N."/>
            <person name="Squares R."/>
            <person name="Squares S."/>
            <person name="Stevens K."/>
            <person name="Taylor K."/>
            <person name="Taylor R.G."/>
            <person name="Tivey A."/>
            <person name="Walsh S.V."/>
            <person name="Warren T."/>
            <person name="Whitehead S."/>
            <person name="Woodward J.R."/>
            <person name="Volckaert G."/>
            <person name="Aert R."/>
            <person name="Robben J."/>
            <person name="Grymonprez B."/>
            <person name="Weltjens I."/>
            <person name="Vanstreels E."/>
            <person name="Rieger M."/>
            <person name="Schaefer M."/>
            <person name="Mueller-Auer S."/>
            <person name="Gabel C."/>
            <person name="Fuchs M."/>
            <person name="Duesterhoeft A."/>
            <person name="Fritzc C."/>
            <person name="Holzer E."/>
            <person name="Moestl D."/>
            <person name="Hilbert H."/>
            <person name="Borzym K."/>
            <person name="Langer I."/>
            <person name="Beck A."/>
            <person name="Lehrach H."/>
            <person name="Reinhardt R."/>
            <person name="Pohl T.M."/>
            <person name="Eger P."/>
            <person name="Zimmermann W."/>
            <person name="Wedler H."/>
            <person name="Wambutt R."/>
            <person name="Purnelle B."/>
            <person name="Goffeau A."/>
            <person name="Cadieu E."/>
            <person name="Dreano S."/>
            <person name="Gloux S."/>
            <person name="Lelaure V."/>
            <person name="Mottier S."/>
            <person name="Galibert F."/>
            <person name="Aves S.J."/>
            <person name="Xiang Z."/>
            <person name="Hunt C."/>
            <person name="Moore K."/>
            <person name="Hurst S.M."/>
            <person name="Lucas M."/>
            <person name="Rochet M."/>
            <person name="Gaillardin C."/>
            <person name="Tallada V.A."/>
            <person name="Garzon A."/>
            <person name="Thode G."/>
            <person name="Daga R.R."/>
            <person name="Cruzado L."/>
            <person name="Jimenez J."/>
            <person name="Sanchez M."/>
            <person name="del Rey F."/>
            <person name="Benito J."/>
            <person name="Dominguez A."/>
            <person name="Revuelta J.L."/>
            <person name="Moreno S."/>
            <person name="Armstrong J."/>
            <person name="Forsburg S.L."/>
            <person name="Cerutti L."/>
            <person name="Lowe T."/>
            <person name="McCombie W.R."/>
            <person name="Paulsen I."/>
            <person name="Potashkin J."/>
            <person name="Shpakovski G.V."/>
            <person name="Ussery D."/>
            <person name="Barrell B.G."/>
            <person name="Nurse P."/>
        </authorList>
    </citation>
    <scope>NUCLEOTIDE SEQUENCE [LARGE SCALE GENOMIC DNA]</scope>
    <source>
        <strain>972 / ATCC 24843</strain>
    </source>
</reference>
<reference key="2">
    <citation type="journal article" date="2011" name="Science">
        <title>Comparative functional genomics of the fission yeasts.</title>
        <authorList>
            <person name="Rhind N."/>
            <person name="Chen Z."/>
            <person name="Yassour M."/>
            <person name="Thompson D.A."/>
            <person name="Haas B.J."/>
            <person name="Habib N."/>
            <person name="Wapinski I."/>
            <person name="Roy S."/>
            <person name="Lin M.F."/>
            <person name="Heiman D.I."/>
            <person name="Young S.K."/>
            <person name="Furuya K."/>
            <person name="Guo Y."/>
            <person name="Pidoux A."/>
            <person name="Chen H.M."/>
            <person name="Robbertse B."/>
            <person name="Goldberg J.M."/>
            <person name="Aoki K."/>
            <person name="Bayne E.H."/>
            <person name="Berlin A.M."/>
            <person name="Desjardins C.A."/>
            <person name="Dobbs E."/>
            <person name="Dukaj L."/>
            <person name="Fan L."/>
            <person name="FitzGerald M.G."/>
            <person name="French C."/>
            <person name="Gujja S."/>
            <person name="Hansen K."/>
            <person name="Keifenheim D."/>
            <person name="Levin J.Z."/>
            <person name="Mosher R.A."/>
            <person name="Mueller C.A."/>
            <person name="Pfiffner J."/>
            <person name="Priest M."/>
            <person name="Russ C."/>
            <person name="Smialowska A."/>
            <person name="Swoboda P."/>
            <person name="Sykes S.M."/>
            <person name="Vaughn M."/>
            <person name="Vengrova S."/>
            <person name="Yoder R."/>
            <person name="Zeng Q."/>
            <person name="Allshire R."/>
            <person name="Baulcombe D."/>
            <person name="Birren B.W."/>
            <person name="Brown W."/>
            <person name="Ekwall K."/>
            <person name="Kellis M."/>
            <person name="Leatherwood J."/>
            <person name="Levin H."/>
            <person name="Margalit H."/>
            <person name="Martienssen R."/>
            <person name="Nieduszynski C.A."/>
            <person name="Spatafora J.W."/>
            <person name="Friedman N."/>
            <person name="Dalgaard J.Z."/>
            <person name="Baumann P."/>
            <person name="Niki H."/>
            <person name="Regev A."/>
            <person name="Nusbaum C."/>
        </authorList>
    </citation>
    <scope>REVISION OF GENE MODEL</scope>
</reference>
<reference key="3">
    <citation type="journal article" date="2011" name="Genetics">
        <title>Augmented annotation of the Schizosaccharomyces pombe genome reveals additional genes required for growth and viability.</title>
        <authorList>
            <person name="Bitton D.A."/>
            <person name="Wood V."/>
            <person name="Scutt P.J."/>
            <person name="Grallert A."/>
            <person name="Yates T."/>
            <person name="Smith D.L."/>
            <person name="Hagan I.M."/>
            <person name="Miller C.J."/>
        </authorList>
    </citation>
    <scope>IDENTIFICATION</scope>
</reference>
<feature type="chain" id="PRO_0000372360" description="Vacuolar protein sorting-associated protein vts1">
    <location>
        <begin position="1"/>
        <end position="389"/>
    </location>
</feature>
<feature type="region of interest" description="Disordered" evidence="3">
    <location>
        <begin position="149"/>
        <end position="335"/>
    </location>
</feature>
<feature type="compositionally biased region" description="Polar residues" evidence="3">
    <location>
        <begin position="156"/>
        <end position="177"/>
    </location>
</feature>
<feature type="compositionally biased region" description="Polar residues" evidence="3">
    <location>
        <begin position="184"/>
        <end position="219"/>
    </location>
</feature>
<feature type="compositionally biased region" description="Polar residues" evidence="3">
    <location>
        <begin position="227"/>
        <end position="282"/>
    </location>
</feature>
<feature type="compositionally biased region" description="Low complexity" evidence="3">
    <location>
        <begin position="294"/>
        <end position="306"/>
    </location>
</feature>
<feature type="compositionally biased region" description="Polar residues" evidence="3">
    <location>
        <begin position="308"/>
        <end position="334"/>
    </location>
</feature>